<gene>
    <name evidence="1" type="primary">recR</name>
    <name type="ordered locus">DET0583</name>
</gene>
<accession>Q3Z8X4</accession>
<feature type="chain" id="PRO_0000322884" description="Recombination protein RecR">
    <location>
        <begin position="1"/>
        <end position="204"/>
    </location>
</feature>
<feature type="domain" description="Toprim" evidence="1">
    <location>
        <begin position="86"/>
        <end position="181"/>
    </location>
</feature>
<feature type="zinc finger region" description="C4-type" evidence="1">
    <location>
        <begin position="63"/>
        <end position="78"/>
    </location>
</feature>
<sequence>MKDTSLPSTAGAVNKLIDSLGKLPGIGPKSAQRLAFYLMRAPEEQVLTLSDTIRSIKNQISQCRICFNVADSELCPICQNTKREANKICVVEQPQDILALEHVGVYRGYYHVLHGAISPTEGITSQNIRINELMSRLNDGQVDEVILATNPTTEGEATAMYLSRLITPLGIKVTRLARGLPFGTELEYADDVTLSRAMEGRQNF</sequence>
<organism>
    <name type="scientific">Dehalococcoides mccartyi (strain ATCC BAA-2266 / KCTC 15142 / 195)</name>
    <name type="common">Dehalococcoides ethenogenes (strain 195)</name>
    <dbReference type="NCBI Taxonomy" id="243164"/>
    <lineage>
        <taxon>Bacteria</taxon>
        <taxon>Bacillati</taxon>
        <taxon>Chloroflexota</taxon>
        <taxon>Dehalococcoidia</taxon>
        <taxon>Dehalococcoidales</taxon>
        <taxon>Dehalococcoidaceae</taxon>
        <taxon>Dehalococcoides</taxon>
    </lineage>
</organism>
<reference key="1">
    <citation type="journal article" date="2005" name="Science">
        <title>Genome sequence of the PCE-dechlorinating bacterium Dehalococcoides ethenogenes.</title>
        <authorList>
            <person name="Seshadri R."/>
            <person name="Adrian L."/>
            <person name="Fouts D.E."/>
            <person name="Eisen J.A."/>
            <person name="Phillippy A.M."/>
            <person name="Methe B.A."/>
            <person name="Ward N.L."/>
            <person name="Nelson W.C."/>
            <person name="DeBoy R.T."/>
            <person name="Khouri H.M."/>
            <person name="Kolonay J.F."/>
            <person name="Dodson R.J."/>
            <person name="Daugherty S.C."/>
            <person name="Brinkac L.M."/>
            <person name="Sullivan S.A."/>
            <person name="Madupu R."/>
            <person name="Nelson K.E."/>
            <person name="Kang K.H."/>
            <person name="Impraim M."/>
            <person name="Tran K."/>
            <person name="Robinson J.M."/>
            <person name="Forberger H.A."/>
            <person name="Fraser C.M."/>
            <person name="Zinder S.H."/>
            <person name="Heidelberg J.F."/>
        </authorList>
    </citation>
    <scope>NUCLEOTIDE SEQUENCE [LARGE SCALE GENOMIC DNA]</scope>
    <source>
        <strain>ATCC BAA-2266 / KCTC 15142 / 195</strain>
    </source>
</reference>
<evidence type="ECO:0000255" key="1">
    <source>
        <dbReference type="HAMAP-Rule" id="MF_00017"/>
    </source>
</evidence>
<comment type="function">
    <text evidence="1">May play a role in DNA repair. It seems to be involved in an RecBC-independent recombinational process of DNA repair. It may act with RecF and RecO.</text>
</comment>
<comment type="similarity">
    <text evidence="1">Belongs to the RecR family.</text>
</comment>
<keyword id="KW-0227">DNA damage</keyword>
<keyword id="KW-0233">DNA recombination</keyword>
<keyword id="KW-0234">DNA repair</keyword>
<keyword id="KW-0479">Metal-binding</keyword>
<keyword id="KW-0862">Zinc</keyword>
<keyword id="KW-0863">Zinc-finger</keyword>
<protein>
    <recommendedName>
        <fullName evidence="1">Recombination protein RecR</fullName>
    </recommendedName>
</protein>
<proteinExistence type="inferred from homology"/>
<dbReference type="EMBL" id="CP000027">
    <property type="protein sequence ID" value="AAW40139.1"/>
    <property type="molecule type" value="Genomic_DNA"/>
</dbReference>
<dbReference type="RefSeq" id="WP_010936358.1">
    <property type="nucleotide sequence ID" value="NC_002936.3"/>
</dbReference>
<dbReference type="SMR" id="Q3Z8X4"/>
<dbReference type="FunCoup" id="Q3Z8X4">
    <property type="interactions" value="205"/>
</dbReference>
<dbReference type="STRING" id="243164.DET0583"/>
<dbReference type="GeneID" id="3230102"/>
<dbReference type="KEGG" id="det:DET0583"/>
<dbReference type="PATRIC" id="fig|243164.10.peg.560"/>
<dbReference type="eggNOG" id="COG0353">
    <property type="taxonomic scope" value="Bacteria"/>
</dbReference>
<dbReference type="HOGENOM" id="CLU_060739_1_0_0"/>
<dbReference type="InParanoid" id="Q3Z8X4"/>
<dbReference type="Proteomes" id="UP000008289">
    <property type="component" value="Chromosome"/>
</dbReference>
<dbReference type="GO" id="GO:0003677">
    <property type="term" value="F:DNA binding"/>
    <property type="evidence" value="ECO:0007669"/>
    <property type="project" value="UniProtKB-UniRule"/>
</dbReference>
<dbReference type="GO" id="GO:0008270">
    <property type="term" value="F:zinc ion binding"/>
    <property type="evidence" value="ECO:0007669"/>
    <property type="project" value="UniProtKB-KW"/>
</dbReference>
<dbReference type="GO" id="GO:0006310">
    <property type="term" value="P:DNA recombination"/>
    <property type="evidence" value="ECO:0007669"/>
    <property type="project" value="UniProtKB-UniRule"/>
</dbReference>
<dbReference type="GO" id="GO:0006281">
    <property type="term" value="P:DNA repair"/>
    <property type="evidence" value="ECO:0007669"/>
    <property type="project" value="UniProtKB-UniRule"/>
</dbReference>
<dbReference type="CDD" id="cd01025">
    <property type="entry name" value="TOPRIM_recR"/>
    <property type="match status" value="1"/>
</dbReference>
<dbReference type="Gene3D" id="3.30.60.80">
    <property type="match status" value="1"/>
</dbReference>
<dbReference type="Gene3D" id="3.40.1360.10">
    <property type="match status" value="1"/>
</dbReference>
<dbReference type="Gene3D" id="6.10.250.240">
    <property type="match status" value="1"/>
</dbReference>
<dbReference type="Gene3D" id="1.10.8.420">
    <property type="entry name" value="RecR Domain 1"/>
    <property type="match status" value="1"/>
</dbReference>
<dbReference type="HAMAP" id="MF_00017">
    <property type="entry name" value="RecR"/>
    <property type="match status" value="1"/>
</dbReference>
<dbReference type="InterPro" id="IPR000093">
    <property type="entry name" value="DNA_Rcmb_RecR"/>
</dbReference>
<dbReference type="InterPro" id="IPR023627">
    <property type="entry name" value="Rcmb_RecR"/>
</dbReference>
<dbReference type="InterPro" id="IPR015967">
    <property type="entry name" value="Rcmb_RecR_Znf"/>
</dbReference>
<dbReference type="InterPro" id="IPR006171">
    <property type="entry name" value="TOPRIM_dom"/>
</dbReference>
<dbReference type="InterPro" id="IPR034137">
    <property type="entry name" value="TOPRIM_RecR"/>
</dbReference>
<dbReference type="NCBIfam" id="TIGR00615">
    <property type="entry name" value="recR"/>
    <property type="match status" value="1"/>
</dbReference>
<dbReference type="PANTHER" id="PTHR30446">
    <property type="entry name" value="RECOMBINATION PROTEIN RECR"/>
    <property type="match status" value="1"/>
</dbReference>
<dbReference type="PANTHER" id="PTHR30446:SF0">
    <property type="entry name" value="RECOMBINATION PROTEIN RECR"/>
    <property type="match status" value="1"/>
</dbReference>
<dbReference type="Pfam" id="PF21175">
    <property type="entry name" value="RecR_C"/>
    <property type="match status" value="1"/>
</dbReference>
<dbReference type="Pfam" id="PF21176">
    <property type="entry name" value="RecR_HhH"/>
    <property type="match status" value="1"/>
</dbReference>
<dbReference type="Pfam" id="PF02132">
    <property type="entry name" value="RecR_ZnF"/>
    <property type="match status" value="1"/>
</dbReference>
<dbReference type="Pfam" id="PF13662">
    <property type="entry name" value="Toprim_4"/>
    <property type="match status" value="1"/>
</dbReference>
<dbReference type="SMART" id="SM00493">
    <property type="entry name" value="TOPRIM"/>
    <property type="match status" value="1"/>
</dbReference>
<dbReference type="SUPFAM" id="SSF111304">
    <property type="entry name" value="Recombination protein RecR"/>
    <property type="match status" value="1"/>
</dbReference>
<dbReference type="PROSITE" id="PS50880">
    <property type="entry name" value="TOPRIM"/>
    <property type="match status" value="1"/>
</dbReference>
<name>RECR_DEHM1</name>